<sequence length="449" mass="48538">MNTLTAPLPMATDALSQFGHDAWWVIGLKAVLILVVLLLLTLFNIWFERRVVGRMQHRPGPNVNGPFGLLQSLADALKLIFKEGIIPKAADKAVYLIAPVIAVIPSFITFSVIPFGPEVTIPFTDTRTPLQLTDMPVAVLFVMAIASIGIYGIVLGGWSSGSTYSLLGGLRSSAQMISYEVAMGLALVAVFLYAGSMSTSEIVAAQDNLWYGLILVPSFVIYLIAMVGETNRAPFDLPEAEGELVGGFHTEYSSMTFALFFLAEYINMATVSAVATTLFLGGWHAPFWLDHAWAGANEGYWPLLWFLGKVLFFVFIFIWLRGTLPRLRYDQFMAFGWKRLIPVALVWIVAVATIRSISLDGGVDRRYLLIGIGALAVVFLVLFFIGGAAEEQPTTVPEAAPAGGYPVPPMPAGGPVRGAAVPLTFDRSSPIASSMPQPSAATRSAGEEI</sequence>
<organism>
    <name type="scientific">Nocardioides sp. (strain ATCC BAA-499 / JS614)</name>
    <dbReference type="NCBI Taxonomy" id="196162"/>
    <lineage>
        <taxon>Bacteria</taxon>
        <taxon>Bacillati</taxon>
        <taxon>Actinomycetota</taxon>
        <taxon>Actinomycetes</taxon>
        <taxon>Propionibacteriales</taxon>
        <taxon>Nocardioidaceae</taxon>
        <taxon>Nocardioides</taxon>
    </lineage>
</organism>
<feature type="chain" id="PRO_0000299945" description="NADH-quinone oxidoreductase subunit H">
    <location>
        <begin position="1"/>
        <end position="449"/>
    </location>
</feature>
<feature type="transmembrane region" description="Helical" evidence="1">
    <location>
        <begin position="23"/>
        <end position="43"/>
    </location>
</feature>
<feature type="transmembrane region" description="Helical" evidence="1">
    <location>
        <begin position="93"/>
        <end position="113"/>
    </location>
</feature>
<feature type="transmembrane region" description="Helical" evidence="1">
    <location>
        <begin position="137"/>
        <end position="157"/>
    </location>
</feature>
<feature type="transmembrane region" description="Helical" evidence="1">
    <location>
        <begin position="176"/>
        <end position="196"/>
    </location>
</feature>
<feature type="transmembrane region" description="Helical" evidence="1">
    <location>
        <begin position="209"/>
        <end position="229"/>
    </location>
</feature>
<feature type="transmembrane region" description="Helical" evidence="1">
    <location>
        <begin position="258"/>
        <end position="280"/>
    </location>
</feature>
<feature type="transmembrane region" description="Helical" evidence="1">
    <location>
        <begin position="300"/>
        <end position="320"/>
    </location>
</feature>
<feature type="transmembrane region" description="Helical" evidence="1">
    <location>
        <begin position="332"/>
        <end position="352"/>
    </location>
</feature>
<feature type="transmembrane region" description="Helical" evidence="1">
    <location>
        <begin position="368"/>
        <end position="388"/>
    </location>
</feature>
<feature type="region of interest" description="Disordered" evidence="2">
    <location>
        <begin position="427"/>
        <end position="449"/>
    </location>
</feature>
<feature type="compositionally biased region" description="Polar residues" evidence="2">
    <location>
        <begin position="427"/>
        <end position="442"/>
    </location>
</feature>
<dbReference type="EC" id="7.1.1.-" evidence="1"/>
<dbReference type="EMBL" id="CP000509">
    <property type="protein sequence ID" value="ABL80069.1"/>
    <property type="molecule type" value="Genomic_DNA"/>
</dbReference>
<dbReference type="RefSeq" id="WP_011754019.1">
    <property type="nucleotide sequence ID" value="NC_008699.1"/>
</dbReference>
<dbReference type="SMR" id="A1SE34"/>
<dbReference type="STRING" id="196162.Noca_0527"/>
<dbReference type="KEGG" id="nca:Noca_0527"/>
<dbReference type="eggNOG" id="COG1005">
    <property type="taxonomic scope" value="Bacteria"/>
</dbReference>
<dbReference type="HOGENOM" id="CLU_015134_0_0_11"/>
<dbReference type="OrthoDB" id="9803734at2"/>
<dbReference type="Proteomes" id="UP000000640">
    <property type="component" value="Chromosome"/>
</dbReference>
<dbReference type="GO" id="GO:0005886">
    <property type="term" value="C:plasma membrane"/>
    <property type="evidence" value="ECO:0007669"/>
    <property type="project" value="UniProtKB-SubCell"/>
</dbReference>
<dbReference type="GO" id="GO:0003954">
    <property type="term" value="F:NADH dehydrogenase activity"/>
    <property type="evidence" value="ECO:0007669"/>
    <property type="project" value="TreeGrafter"/>
</dbReference>
<dbReference type="GO" id="GO:0016655">
    <property type="term" value="F:oxidoreductase activity, acting on NAD(P)H, quinone or similar compound as acceptor"/>
    <property type="evidence" value="ECO:0007669"/>
    <property type="project" value="UniProtKB-UniRule"/>
</dbReference>
<dbReference type="GO" id="GO:0048038">
    <property type="term" value="F:quinone binding"/>
    <property type="evidence" value="ECO:0007669"/>
    <property type="project" value="UniProtKB-KW"/>
</dbReference>
<dbReference type="GO" id="GO:0009060">
    <property type="term" value="P:aerobic respiration"/>
    <property type="evidence" value="ECO:0007669"/>
    <property type="project" value="TreeGrafter"/>
</dbReference>
<dbReference type="HAMAP" id="MF_01350">
    <property type="entry name" value="NDH1_NuoH"/>
    <property type="match status" value="1"/>
</dbReference>
<dbReference type="InterPro" id="IPR001694">
    <property type="entry name" value="NADH_UbQ_OxRdtase_su1/FPO"/>
</dbReference>
<dbReference type="InterPro" id="IPR018086">
    <property type="entry name" value="NADH_UbQ_OxRdtase_su1_CS"/>
</dbReference>
<dbReference type="NCBIfam" id="NF004741">
    <property type="entry name" value="PRK06076.1-2"/>
    <property type="match status" value="1"/>
</dbReference>
<dbReference type="NCBIfam" id="NF004743">
    <property type="entry name" value="PRK06076.1-4"/>
    <property type="match status" value="1"/>
</dbReference>
<dbReference type="PANTHER" id="PTHR11432">
    <property type="entry name" value="NADH DEHYDROGENASE SUBUNIT 1"/>
    <property type="match status" value="1"/>
</dbReference>
<dbReference type="PANTHER" id="PTHR11432:SF3">
    <property type="entry name" value="NADH-UBIQUINONE OXIDOREDUCTASE CHAIN 1"/>
    <property type="match status" value="1"/>
</dbReference>
<dbReference type="Pfam" id="PF00146">
    <property type="entry name" value="NADHdh"/>
    <property type="match status" value="1"/>
</dbReference>
<dbReference type="PROSITE" id="PS00667">
    <property type="entry name" value="COMPLEX1_ND1_1"/>
    <property type="match status" value="1"/>
</dbReference>
<dbReference type="PROSITE" id="PS00668">
    <property type="entry name" value="COMPLEX1_ND1_2"/>
    <property type="match status" value="1"/>
</dbReference>
<accession>A1SE34</accession>
<protein>
    <recommendedName>
        <fullName evidence="1">NADH-quinone oxidoreductase subunit H</fullName>
        <ecNumber evidence="1">7.1.1.-</ecNumber>
    </recommendedName>
    <alternativeName>
        <fullName evidence="1">NADH dehydrogenase I subunit H</fullName>
    </alternativeName>
    <alternativeName>
        <fullName evidence="1">NDH-1 subunit H</fullName>
    </alternativeName>
</protein>
<comment type="function">
    <text evidence="1">NDH-1 shuttles electrons from NADH, via FMN and iron-sulfur (Fe-S) centers, to quinones in the respiratory chain. The immediate electron acceptor for the enzyme in this species is believed to be ubiquinone. Couples the redox reaction to proton translocation (for every two electrons transferred, four hydrogen ions are translocated across the cytoplasmic membrane), and thus conserves the redox energy in a proton gradient. This subunit may bind ubiquinone.</text>
</comment>
<comment type="catalytic activity">
    <reaction evidence="1">
        <text>a quinone + NADH + 5 H(+)(in) = a quinol + NAD(+) + 4 H(+)(out)</text>
        <dbReference type="Rhea" id="RHEA:57888"/>
        <dbReference type="ChEBI" id="CHEBI:15378"/>
        <dbReference type="ChEBI" id="CHEBI:24646"/>
        <dbReference type="ChEBI" id="CHEBI:57540"/>
        <dbReference type="ChEBI" id="CHEBI:57945"/>
        <dbReference type="ChEBI" id="CHEBI:132124"/>
    </reaction>
</comment>
<comment type="subunit">
    <text evidence="1">NDH-1 is composed of 14 different subunits. Subunits NuoA, H, J, K, L, M, N constitute the membrane sector of the complex.</text>
</comment>
<comment type="subcellular location">
    <subcellularLocation>
        <location evidence="1">Cell membrane</location>
        <topology evidence="1">Multi-pass membrane protein</topology>
    </subcellularLocation>
</comment>
<comment type="similarity">
    <text evidence="1">Belongs to the complex I subunit 1 family.</text>
</comment>
<name>NUOH_NOCSJ</name>
<reference key="1">
    <citation type="submission" date="2006-12" db="EMBL/GenBank/DDBJ databases">
        <title>Complete sequence of chromosome 1 of Nocardioides sp. JS614.</title>
        <authorList>
            <person name="Copeland A."/>
            <person name="Lucas S."/>
            <person name="Lapidus A."/>
            <person name="Barry K."/>
            <person name="Detter J.C."/>
            <person name="Glavina del Rio T."/>
            <person name="Hammon N."/>
            <person name="Israni S."/>
            <person name="Dalin E."/>
            <person name="Tice H."/>
            <person name="Pitluck S."/>
            <person name="Thompson L.S."/>
            <person name="Brettin T."/>
            <person name="Bruce D."/>
            <person name="Han C."/>
            <person name="Tapia R."/>
            <person name="Schmutz J."/>
            <person name="Larimer F."/>
            <person name="Land M."/>
            <person name="Hauser L."/>
            <person name="Kyrpides N."/>
            <person name="Kim E."/>
            <person name="Mattes T."/>
            <person name="Gossett J."/>
            <person name="Richardson P."/>
        </authorList>
    </citation>
    <scope>NUCLEOTIDE SEQUENCE [LARGE SCALE GENOMIC DNA]</scope>
    <source>
        <strain>ATCC BAA-499 / JS614</strain>
    </source>
</reference>
<proteinExistence type="inferred from homology"/>
<evidence type="ECO:0000255" key="1">
    <source>
        <dbReference type="HAMAP-Rule" id="MF_01350"/>
    </source>
</evidence>
<evidence type="ECO:0000256" key="2">
    <source>
        <dbReference type="SAM" id="MobiDB-lite"/>
    </source>
</evidence>
<gene>
    <name evidence="1" type="primary">nuoH</name>
    <name type="ordered locus">Noca_0527</name>
</gene>
<keyword id="KW-1003">Cell membrane</keyword>
<keyword id="KW-0472">Membrane</keyword>
<keyword id="KW-0520">NAD</keyword>
<keyword id="KW-0874">Quinone</keyword>
<keyword id="KW-1185">Reference proteome</keyword>
<keyword id="KW-1278">Translocase</keyword>
<keyword id="KW-0812">Transmembrane</keyword>
<keyword id="KW-1133">Transmembrane helix</keyword>
<keyword id="KW-0830">Ubiquinone</keyword>